<feature type="chain" id="PRO_0000274487" description="Homeobox protein Hox-B4">
    <location>
        <begin position="1"/>
        <end position="251"/>
    </location>
</feature>
<feature type="DNA-binding region" description="Homeobox" evidence="3">
    <location>
        <begin position="162"/>
        <end position="221"/>
    </location>
</feature>
<feature type="region of interest" description="Disordered" evidence="4">
    <location>
        <begin position="1"/>
        <end position="134"/>
    </location>
</feature>
<feature type="region of interest" description="Disordered" evidence="4">
    <location>
        <begin position="219"/>
        <end position="251"/>
    </location>
</feature>
<feature type="short sequence motif" description="Antp-type hexapeptide">
    <location>
        <begin position="141"/>
        <end position="146"/>
    </location>
</feature>
<feature type="compositionally biased region" description="Polar residues" evidence="4">
    <location>
        <begin position="1"/>
        <end position="12"/>
    </location>
</feature>
<feature type="compositionally biased region" description="Pro residues" evidence="4">
    <location>
        <begin position="71"/>
        <end position="97"/>
    </location>
</feature>
<feature type="compositionally biased region" description="Pro residues" evidence="4">
    <location>
        <begin position="241"/>
        <end position="251"/>
    </location>
</feature>
<feature type="modified residue" description="Phosphoserine" evidence="2">
    <location>
        <position position="90"/>
    </location>
</feature>
<name>HXB4_BOVIN</name>
<gene>
    <name type="primary">HOXB4</name>
</gene>
<organism>
    <name type="scientific">Bos taurus</name>
    <name type="common">Bovine</name>
    <dbReference type="NCBI Taxonomy" id="9913"/>
    <lineage>
        <taxon>Eukaryota</taxon>
        <taxon>Metazoa</taxon>
        <taxon>Chordata</taxon>
        <taxon>Craniata</taxon>
        <taxon>Vertebrata</taxon>
        <taxon>Euteleostomi</taxon>
        <taxon>Mammalia</taxon>
        <taxon>Eutheria</taxon>
        <taxon>Laurasiatheria</taxon>
        <taxon>Artiodactyla</taxon>
        <taxon>Ruminantia</taxon>
        <taxon>Pecora</taxon>
        <taxon>Bovidae</taxon>
        <taxon>Bovinae</taxon>
        <taxon>Bos</taxon>
    </lineage>
</organism>
<protein>
    <recommendedName>
        <fullName>Homeobox protein Hox-B4</fullName>
    </recommendedName>
</protein>
<evidence type="ECO:0000250" key="1"/>
<evidence type="ECO:0000250" key="2">
    <source>
        <dbReference type="UniProtKB" id="P17483"/>
    </source>
</evidence>
<evidence type="ECO:0000255" key="3">
    <source>
        <dbReference type="PROSITE-ProRule" id="PRU00108"/>
    </source>
</evidence>
<evidence type="ECO:0000256" key="4">
    <source>
        <dbReference type="SAM" id="MobiDB-lite"/>
    </source>
</evidence>
<evidence type="ECO:0000305" key="5"/>
<accession>Q08DG5</accession>
<sequence length="251" mass="27683">MAMSSFLINSNYVDPKFPPCEEYSQSDYLPSDHSPGYYAGGQRRESSFQPEAGFGRRSACTVQRYAACRDPGPPPPQPPPPPPPPPPGLSPRAPAQPPSGALLPEPGQRCEAISSSPPPPPCAQNPLHPSPSHSACKEPVVYPWMRKVHVSTVNPNYAGGEPKRSRTAYTRQQVLELEKEFHYNRYLTRRRRVEIAHALCLSERQIKIWFQNRRMKWKKDHKLPNTKIRSGGTAGSAGGPPGRPNGGPPAL</sequence>
<dbReference type="EMBL" id="BC123761">
    <property type="protein sequence ID" value="AAI23762.1"/>
    <property type="molecule type" value="mRNA"/>
</dbReference>
<dbReference type="RefSeq" id="NP_001071582.1">
    <property type="nucleotide sequence ID" value="NM_001078114.1"/>
</dbReference>
<dbReference type="SMR" id="Q08DG5"/>
<dbReference type="FunCoup" id="Q08DG5">
    <property type="interactions" value="155"/>
</dbReference>
<dbReference type="STRING" id="9913.ENSBTAP00000040977"/>
<dbReference type="PaxDb" id="9913-ENSBTAP00000040977"/>
<dbReference type="Ensembl" id="ENSBTAT00000043402.4">
    <property type="protein sequence ID" value="ENSBTAP00000040977.4"/>
    <property type="gene ID" value="ENSBTAG00000039599.4"/>
</dbReference>
<dbReference type="GeneID" id="768240"/>
<dbReference type="KEGG" id="bta:768240"/>
<dbReference type="CTD" id="3214"/>
<dbReference type="VEuPathDB" id="HostDB:ENSBTAG00000039599"/>
<dbReference type="VGNC" id="VGNC:29920">
    <property type="gene designation" value="HOXB4"/>
</dbReference>
<dbReference type="eggNOG" id="KOG0489">
    <property type="taxonomic scope" value="Eukaryota"/>
</dbReference>
<dbReference type="GeneTree" id="ENSGT00940000162072"/>
<dbReference type="InParanoid" id="Q08DG5"/>
<dbReference type="OMA" id="EPPYTQC"/>
<dbReference type="OrthoDB" id="6159439at2759"/>
<dbReference type="Proteomes" id="UP000009136">
    <property type="component" value="Chromosome 19"/>
</dbReference>
<dbReference type="Bgee" id="ENSBTAG00000039599">
    <property type="expression patterns" value="Expressed in laryngeal cartilage and 84 other cell types or tissues"/>
</dbReference>
<dbReference type="GO" id="GO:0005813">
    <property type="term" value="C:centrosome"/>
    <property type="evidence" value="ECO:0007669"/>
    <property type="project" value="Ensembl"/>
</dbReference>
<dbReference type="GO" id="GO:0005654">
    <property type="term" value="C:nucleoplasm"/>
    <property type="evidence" value="ECO:0000318"/>
    <property type="project" value="GO_Central"/>
</dbReference>
<dbReference type="GO" id="GO:0000981">
    <property type="term" value="F:DNA-binding transcription factor activity, RNA polymerase II-specific"/>
    <property type="evidence" value="ECO:0000318"/>
    <property type="project" value="GO_Central"/>
</dbReference>
<dbReference type="GO" id="GO:0000978">
    <property type="term" value="F:RNA polymerase II cis-regulatory region sequence-specific DNA binding"/>
    <property type="evidence" value="ECO:0000318"/>
    <property type="project" value="GO_Central"/>
</dbReference>
<dbReference type="GO" id="GO:0009952">
    <property type="term" value="P:anterior/posterior pattern specification"/>
    <property type="evidence" value="ECO:0000318"/>
    <property type="project" value="GO_Central"/>
</dbReference>
<dbReference type="GO" id="GO:0048539">
    <property type="term" value="P:bone marrow development"/>
    <property type="evidence" value="ECO:0007669"/>
    <property type="project" value="Ensembl"/>
</dbReference>
<dbReference type="GO" id="GO:0060216">
    <property type="term" value="P:definitive hemopoiesis"/>
    <property type="evidence" value="ECO:0007669"/>
    <property type="project" value="Ensembl"/>
</dbReference>
<dbReference type="GO" id="GO:0048704">
    <property type="term" value="P:embryonic skeletal system morphogenesis"/>
    <property type="evidence" value="ECO:0000318"/>
    <property type="project" value="GO_Central"/>
</dbReference>
<dbReference type="GO" id="GO:0060218">
    <property type="term" value="P:hematopoietic stem cell differentiation"/>
    <property type="evidence" value="ECO:0007669"/>
    <property type="project" value="Ensembl"/>
</dbReference>
<dbReference type="GO" id="GO:0071425">
    <property type="term" value="P:hematopoietic stem cell proliferation"/>
    <property type="evidence" value="ECO:0007669"/>
    <property type="project" value="Ensembl"/>
</dbReference>
<dbReference type="GO" id="GO:0002011">
    <property type="term" value="P:morphogenesis of an epithelial sheet"/>
    <property type="evidence" value="ECO:0007669"/>
    <property type="project" value="Ensembl"/>
</dbReference>
<dbReference type="GO" id="GO:0000122">
    <property type="term" value="P:negative regulation of transcription by RNA polymerase II"/>
    <property type="evidence" value="ECO:0007669"/>
    <property type="project" value="Ensembl"/>
</dbReference>
<dbReference type="GO" id="GO:2000738">
    <property type="term" value="P:positive regulation of stem cell differentiation"/>
    <property type="evidence" value="ECO:0007669"/>
    <property type="project" value="Ensembl"/>
</dbReference>
<dbReference type="GO" id="GO:0045944">
    <property type="term" value="P:positive regulation of transcription by RNA polymerase II"/>
    <property type="evidence" value="ECO:0000318"/>
    <property type="project" value="GO_Central"/>
</dbReference>
<dbReference type="GO" id="GO:0048103">
    <property type="term" value="P:somatic stem cell division"/>
    <property type="evidence" value="ECO:0007669"/>
    <property type="project" value="Ensembl"/>
</dbReference>
<dbReference type="GO" id="GO:0048536">
    <property type="term" value="P:spleen development"/>
    <property type="evidence" value="ECO:0007669"/>
    <property type="project" value="Ensembl"/>
</dbReference>
<dbReference type="CDD" id="cd00086">
    <property type="entry name" value="homeodomain"/>
    <property type="match status" value="1"/>
</dbReference>
<dbReference type="FunFam" id="1.10.10.60:FF:000029">
    <property type="entry name" value="Homeobox protein Hox-D4"/>
    <property type="match status" value="1"/>
</dbReference>
<dbReference type="Gene3D" id="1.10.10.60">
    <property type="entry name" value="Homeodomain-like"/>
    <property type="match status" value="1"/>
</dbReference>
<dbReference type="InterPro" id="IPR050609">
    <property type="entry name" value="Antp_homeobox_Deformed_sf"/>
</dbReference>
<dbReference type="InterPro" id="IPR001356">
    <property type="entry name" value="HD"/>
</dbReference>
<dbReference type="InterPro" id="IPR020479">
    <property type="entry name" value="HD_metazoa"/>
</dbReference>
<dbReference type="InterPro" id="IPR017995">
    <property type="entry name" value="Homeobox_antennapedia"/>
</dbReference>
<dbReference type="InterPro" id="IPR001827">
    <property type="entry name" value="Homeobox_Antennapedia_CS"/>
</dbReference>
<dbReference type="InterPro" id="IPR017970">
    <property type="entry name" value="Homeobox_CS"/>
</dbReference>
<dbReference type="InterPro" id="IPR009057">
    <property type="entry name" value="Homeodomain-like_sf"/>
</dbReference>
<dbReference type="PANTHER" id="PTHR45771:SF3">
    <property type="entry name" value="HOMEOBOX PROTEIN HOX-B4"/>
    <property type="match status" value="1"/>
</dbReference>
<dbReference type="PANTHER" id="PTHR45771">
    <property type="entry name" value="HOMEOTIC PROTEIN DEFORMED"/>
    <property type="match status" value="1"/>
</dbReference>
<dbReference type="Pfam" id="PF00046">
    <property type="entry name" value="Homeodomain"/>
    <property type="match status" value="1"/>
</dbReference>
<dbReference type="PRINTS" id="PR00025">
    <property type="entry name" value="ANTENNAPEDIA"/>
</dbReference>
<dbReference type="PRINTS" id="PR00024">
    <property type="entry name" value="HOMEOBOX"/>
</dbReference>
<dbReference type="SMART" id="SM00389">
    <property type="entry name" value="HOX"/>
    <property type="match status" value="1"/>
</dbReference>
<dbReference type="SUPFAM" id="SSF101447">
    <property type="entry name" value="Formin homology 2 domain (FH2 domain)"/>
    <property type="match status" value="1"/>
</dbReference>
<dbReference type="SUPFAM" id="SSF46689">
    <property type="entry name" value="Homeodomain-like"/>
    <property type="match status" value="1"/>
</dbReference>
<dbReference type="PROSITE" id="PS00032">
    <property type="entry name" value="ANTENNAPEDIA"/>
    <property type="match status" value="1"/>
</dbReference>
<dbReference type="PROSITE" id="PS00027">
    <property type="entry name" value="HOMEOBOX_1"/>
    <property type="match status" value="1"/>
</dbReference>
<dbReference type="PROSITE" id="PS50071">
    <property type="entry name" value="HOMEOBOX_2"/>
    <property type="match status" value="1"/>
</dbReference>
<reference key="1">
    <citation type="submission" date="2006-09" db="EMBL/GenBank/DDBJ databases">
        <authorList>
            <consortium name="NIH - Mammalian Gene Collection (MGC) project"/>
        </authorList>
    </citation>
    <scope>NUCLEOTIDE SEQUENCE [LARGE SCALE MRNA]</scope>
    <source>
        <strain>Hereford</strain>
        <tissue>Ascending colon</tissue>
    </source>
</reference>
<comment type="function">
    <text evidence="1">Sequence-specific transcription factor which is part of a developmental regulatory system that provides cells with specific positional identities on the anterior-posterior axis.</text>
</comment>
<comment type="subcellular location">
    <subcellularLocation>
        <location evidence="3">Nucleus</location>
    </subcellularLocation>
</comment>
<comment type="similarity">
    <text evidence="5">Belongs to the Antp homeobox family. Deformed subfamily.</text>
</comment>
<proteinExistence type="evidence at transcript level"/>
<keyword id="KW-0217">Developmental protein</keyword>
<keyword id="KW-0238">DNA-binding</keyword>
<keyword id="KW-0371">Homeobox</keyword>
<keyword id="KW-0539">Nucleus</keyword>
<keyword id="KW-0597">Phosphoprotein</keyword>
<keyword id="KW-1185">Reference proteome</keyword>
<keyword id="KW-0804">Transcription</keyword>
<keyword id="KW-0805">Transcription regulation</keyword>